<organism>
    <name type="scientific">Mycoplasma genitalium (strain ATCC 33530 / DSM 19775 / NCTC 10195 / G37)</name>
    <name type="common">Mycoplasmoides genitalium</name>
    <dbReference type="NCBI Taxonomy" id="243273"/>
    <lineage>
        <taxon>Bacteria</taxon>
        <taxon>Bacillati</taxon>
        <taxon>Mycoplasmatota</taxon>
        <taxon>Mycoplasmoidales</taxon>
        <taxon>Mycoplasmoidaceae</taxon>
        <taxon>Mycoplasmoides</taxon>
    </lineage>
</organism>
<evidence type="ECO:0000250" key="1"/>
<evidence type="ECO:0000305" key="2"/>
<feature type="initiator methionine" description="Removed" evidence="1">
    <location>
        <position position="1"/>
    </location>
</feature>
<feature type="chain" id="PRO_0000170836" description="Formamidopyrimidine-DNA glycosylase">
    <location>
        <begin position="2"/>
        <end position="284"/>
    </location>
</feature>
<feature type="zinc finger region" description="FPG-type">
    <location>
        <begin position="239"/>
        <end position="273"/>
    </location>
</feature>
<feature type="active site" description="Schiff-base intermediate with DNA" evidence="1">
    <location>
        <position position="2"/>
    </location>
</feature>
<feature type="active site" description="Proton donor" evidence="1">
    <location>
        <position position="3"/>
    </location>
</feature>
<feature type="active site" description="Proton donor; for beta-elimination activity" evidence="1">
    <location>
        <position position="59"/>
    </location>
</feature>
<feature type="active site" description="Proton donor; for delta-elimination activity" evidence="1">
    <location>
        <position position="263"/>
    </location>
</feature>
<feature type="binding site" evidence="1">
    <location>
        <position position="94"/>
    </location>
    <ligand>
        <name>DNA</name>
        <dbReference type="ChEBI" id="CHEBI:16991"/>
    </ligand>
</feature>
<feature type="binding site" evidence="1">
    <location>
        <position position="113"/>
    </location>
    <ligand>
        <name>DNA</name>
        <dbReference type="ChEBI" id="CHEBI:16991"/>
    </ligand>
</feature>
<name>FPG_MYCGE</name>
<gene>
    <name type="primary">mutM</name>
    <name type="synonym">fpg</name>
    <name type="ordered locus">MG262.1</name>
</gene>
<keyword id="KW-0227">DNA damage</keyword>
<keyword id="KW-0234">DNA repair</keyword>
<keyword id="KW-0238">DNA-binding</keyword>
<keyword id="KW-0326">Glycosidase</keyword>
<keyword id="KW-0378">Hydrolase</keyword>
<keyword id="KW-0456">Lyase</keyword>
<keyword id="KW-0479">Metal-binding</keyword>
<keyword id="KW-0511">Multifunctional enzyme</keyword>
<keyword id="KW-1185">Reference proteome</keyword>
<keyword id="KW-0862">Zinc</keyword>
<keyword id="KW-0863">Zinc-finger</keyword>
<dbReference type="EC" id="3.2.2.23"/>
<dbReference type="EC" id="4.2.99.18"/>
<dbReference type="EMBL" id="L43967">
    <property type="protein sequence ID" value="AAC71484.1"/>
    <property type="molecule type" value="Genomic_DNA"/>
</dbReference>
<dbReference type="RefSeq" id="WP_010869400.1">
    <property type="nucleotide sequence ID" value="NC_000908.2"/>
</dbReference>
<dbReference type="SMR" id="P55825"/>
<dbReference type="FunCoup" id="P55825">
    <property type="interactions" value="137"/>
</dbReference>
<dbReference type="STRING" id="243273.MG_498"/>
<dbReference type="GeneID" id="88282417"/>
<dbReference type="KEGG" id="mge:MG_498"/>
<dbReference type="eggNOG" id="COG0266">
    <property type="taxonomic scope" value="Bacteria"/>
</dbReference>
<dbReference type="HOGENOM" id="CLU_038423_1_3_14"/>
<dbReference type="InParanoid" id="P55825"/>
<dbReference type="OrthoDB" id="9800855at2"/>
<dbReference type="BioCyc" id="MGEN243273:G1GJ2-318-MONOMER"/>
<dbReference type="Proteomes" id="UP000000807">
    <property type="component" value="Chromosome"/>
</dbReference>
<dbReference type="GO" id="GO:0034039">
    <property type="term" value="F:8-oxo-7,8-dihydroguanine DNA N-glycosylase activity"/>
    <property type="evidence" value="ECO:0000318"/>
    <property type="project" value="GO_Central"/>
</dbReference>
<dbReference type="GO" id="GO:0140078">
    <property type="term" value="F:class I DNA-(apurinic or apyrimidinic site) endonuclease activity"/>
    <property type="evidence" value="ECO:0007669"/>
    <property type="project" value="UniProtKB-EC"/>
</dbReference>
<dbReference type="GO" id="GO:0003684">
    <property type="term" value="F:damaged DNA binding"/>
    <property type="evidence" value="ECO:0007669"/>
    <property type="project" value="InterPro"/>
</dbReference>
<dbReference type="GO" id="GO:0003906">
    <property type="term" value="F:DNA-(apurinic or apyrimidinic site) endonuclease activity"/>
    <property type="evidence" value="ECO:0000318"/>
    <property type="project" value="GO_Central"/>
</dbReference>
<dbReference type="GO" id="GO:0008270">
    <property type="term" value="F:zinc ion binding"/>
    <property type="evidence" value="ECO:0007669"/>
    <property type="project" value="UniProtKB-UniRule"/>
</dbReference>
<dbReference type="GO" id="GO:0006284">
    <property type="term" value="P:base-excision repair"/>
    <property type="evidence" value="ECO:0000318"/>
    <property type="project" value="GO_Central"/>
</dbReference>
<dbReference type="CDD" id="cd08966">
    <property type="entry name" value="EcFpg-like_N"/>
    <property type="match status" value="1"/>
</dbReference>
<dbReference type="FunFam" id="1.10.8.50:FF:000003">
    <property type="entry name" value="Formamidopyrimidine-DNA glycosylase"/>
    <property type="match status" value="1"/>
</dbReference>
<dbReference type="Gene3D" id="1.10.8.50">
    <property type="match status" value="1"/>
</dbReference>
<dbReference type="Gene3D" id="3.20.190.10">
    <property type="entry name" value="MutM-like, N-terminal"/>
    <property type="match status" value="1"/>
</dbReference>
<dbReference type="HAMAP" id="MF_00103">
    <property type="entry name" value="Fapy_DNA_glycosyl"/>
    <property type="match status" value="1"/>
</dbReference>
<dbReference type="InterPro" id="IPR015886">
    <property type="entry name" value="DNA_glyclase/AP_lyase_DNA-bd"/>
</dbReference>
<dbReference type="InterPro" id="IPR015887">
    <property type="entry name" value="DNA_glyclase_Znf_dom_DNA_BS"/>
</dbReference>
<dbReference type="InterPro" id="IPR020629">
    <property type="entry name" value="Formamido-pyr_DNA_Glyclase"/>
</dbReference>
<dbReference type="InterPro" id="IPR012319">
    <property type="entry name" value="FPG_cat"/>
</dbReference>
<dbReference type="InterPro" id="IPR035937">
    <property type="entry name" value="MutM-like_N-ter"/>
</dbReference>
<dbReference type="InterPro" id="IPR010979">
    <property type="entry name" value="Ribosomal_uS13-like_H2TH"/>
</dbReference>
<dbReference type="InterPro" id="IPR000214">
    <property type="entry name" value="Znf_DNA_glyclase/AP_lyase"/>
</dbReference>
<dbReference type="InterPro" id="IPR010663">
    <property type="entry name" value="Znf_FPG/IleRS"/>
</dbReference>
<dbReference type="NCBIfam" id="TIGR00577">
    <property type="entry name" value="fpg"/>
    <property type="match status" value="1"/>
</dbReference>
<dbReference type="NCBIfam" id="NF002211">
    <property type="entry name" value="PRK01103.1"/>
    <property type="match status" value="1"/>
</dbReference>
<dbReference type="PANTHER" id="PTHR22993">
    <property type="entry name" value="FORMAMIDOPYRIMIDINE-DNA GLYCOSYLASE"/>
    <property type="match status" value="1"/>
</dbReference>
<dbReference type="PANTHER" id="PTHR22993:SF9">
    <property type="entry name" value="FORMAMIDOPYRIMIDINE-DNA GLYCOSYLASE"/>
    <property type="match status" value="1"/>
</dbReference>
<dbReference type="Pfam" id="PF01149">
    <property type="entry name" value="Fapy_DNA_glyco"/>
    <property type="match status" value="1"/>
</dbReference>
<dbReference type="Pfam" id="PF06831">
    <property type="entry name" value="H2TH"/>
    <property type="match status" value="1"/>
</dbReference>
<dbReference type="Pfam" id="PF06827">
    <property type="entry name" value="zf-FPG_IleRS"/>
    <property type="match status" value="1"/>
</dbReference>
<dbReference type="SMART" id="SM00898">
    <property type="entry name" value="Fapy_DNA_glyco"/>
    <property type="match status" value="1"/>
</dbReference>
<dbReference type="SMART" id="SM01232">
    <property type="entry name" value="H2TH"/>
    <property type="match status" value="1"/>
</dbReference>
<dbReference type="SUPFAM" id="SSF57716">
    <property type="entry name" value="Glucocorticoid receptor-like (DNA-binding domain)"/>
    <property type="match status" value="1"/>
</dbReference>
<dbReference type="SUPFAM" id="SSF81624">
    <property type="entry name" value="N-terminal domain of MutM-like DNA repair proteins"/>
    <property type="match status" value="1"/>
</dbReference>
<dbReference type="SUPFAM" id="SSF46946">
    <property type="entry name" value="S13-like H2TH domain"/>
    <property type="match status" value="1"/>
</dbReference>
<dbReference type="PROSITE" id="PS51068">
    <property type="entry name" value="FPG_CAT"/>
    <property type="match status" value="1"/>
</dbReference>
<dbReference type="PROSITE" id="PS01242">
    <property type="entry name" value="ZF_FPG_1"/>
    <property type="match status" value="1"/>
</dbReference>
<dbReference type="PROSITE" id="PS51066">
    <property type="entry name" value="ZF_FPG_2"/>
    <property type="match status" value="1"/>
</dbReference>
<reference key="1">
    <citation type="journal article" date="1995" name="Science">
        <title>The minimal gene complement of Mycoplasma genitalium.</title>
        <authorList>
            <person name="Fraser C.M."/>
            <person name="Gocayne J.D."/>
            <person name="White O."/>
            <person name="Adams M.D."/>
            <person name="Clayton R.A."/>
            <person name="Fleischmann R.D."/>
            <person name="Bult C.J."/>
            <person name="Kerlavage A.R."/>
            <person name="Sutton G.G."/>
            <person name="Kelley J.M."/>
            <person name="Fritchman J.L."/>
            <person name="Weidman J.F."/>
            <person name="Small K.V."/>
            <person name="Sandusky M."/>
            <person name="Fuhrmann J.L."/>
            <person name="Nguyen D.T."/>
            <person name="Utterback T.R."/>
            <person name="Saudek D.M."/>
            <person name="Phillips C.A."/>
            <person name="Merrick J.M."/>
            <person name="Tomb J.-F."/>
            <person name="Dougherty B.A."/>
            <person name="Bott K.F."/>
            <person name="Hu P.-C."/>
            <person name="Lucier T.S."/>
            <person name="Peterson S.N."/>
            <person name="Smith H.O."/>
            <person name="Hutchison C.A. III"/>
            <person name="Venter J.C."/>
        </authorList>
    </citation>
    <scope>NUCLEOTIDE SEQUENCE [LARGE SCALE GENOMIC DNA]</scope>
    <source>
        <strain>ATCC 33530 / DSM 19775 / NCTC 10195 / G37</strain>
    </source>
</reference>
<reference key="2">
    <citation type="journal article" date="1996" name="Science">
        <title>More Haemophilus and Mycoplasma genes.</title>
        <authorList>
            <person name="Robison K."/>
            <person name="Gilbert W."/>
            <person name="Church G.M."/>
        </authorList>
    </citation>
    <scope>IDENTIFICATION</scope>
</reference>
<sequence length="284" mass="32749">MPELPEVTTVINELKETVLNKPLDQVQVNLRKVLKNIDPQLLNKQLKNQFFTDIKRKGKYIIFLLSNGLYLVSHLRMEGKYFFEERGSKFNQKHVLVEFHFDDGSQLNYHDTRQFGTFHLYEKLEQAAQLNKLAFDPLEAGFDYRKIFQKAQNSKRKVKTFILDQTVISGIGNIYADEILFASKINPETMVDQLTIKEIEILCKNATKILAKAIVMKGTTISSFSFKKDHTGGYQNFLKVHTKKDQPCSVCNQLIVKKKINGRGSYFCLNCQKITTKVSTKLNP</sequence>
<proteinExistence type="inferred from homology"/>
<comment type="function">
    <text evidence="1">Involved in base excision repair of DNA damaged by oxidation or by mutagenic agents. Acts as a DNA glycosylase that recognizes and removes damaged bases. Has a preference for oxidized purines, such as 7,8-dihydro-8-oxoguanine (8-oxoG). Has AP (apurinic/apyrimidinic) lyase activity and introduces nicks in the DNA strand. Cleaves the DNA backbone by beta-delta elimination to generate a single-strand break at the site of the removed base with both 3'- and 5'-phosphates (By similarity).</text>
</comment>
<comment type="catalytic activity">
    <reaction>
        <text>Hydrolysis of DNA containing ring-opened 7-methylguanine residues, releasing 2,6-diamino-4-hydroxy-5-(N-methyl)formamidopyrimidine.</text>
        <dbReference type="EC" id="3.2.2.23"/>
    </reaction>
</comment>
<comment type="catalytic activity">
    <reaction>
        <text>2'-deoxyribonucleotide-(2'-deoxyribose 5'-phosphate)-2'-deoxyribonucleotide-DNA = a 3'-end 2'-deoxyribonucleotide-(2,3-dehydro-2,3-deoxyribose 5'-phosphate)-DNA + a 5'-end 5'-phospho-2'-deoxyribonucleoside-DNA + H(+)</text>
        <dbReference type="Rhea" id="RHEA:66592"/>
        <dbReference type="Rhea" id="RHEA-COMP:13180"/>
        <dbReference type="Rhea" id="RHEA-COMP:16897"/>
        <dbReference type="Rhea" id="RHEA-COMP:17067"/>
        <dbReference type="ChEBI" id="CHEBI:15378"/>
        <dbReference type="ChEBI" id="CHEBI:136412"/>
        <dbReference type="ChEBI" id="CHEBI:157695"/>
        <dbReference type="ChEBI" id="CHEBI:167181"/>
        <dbReference type="EC" id="4.2.99.18"/>
    </reaction>
</comment>
<comment type="cofactor">
    <cofactor evidence="1">
        <name>Zn(2+)</name>
        <dbReference type="ChEBI" id="CHEBI:29105"/>
    </cofactor>
    <text evidence="1">Binds 1 zinc ion per subunit.</text>
</comment>
<comment type="subunit">
    <text evidence="1">Monomer.</text>
</comment>
<comment type="similarity">
    <text evidence="2">Belongs to the FPG family.</text>
</comment>
<protein>
    <recommendedName>
        <fullName>Formamidopyrimidine-DNA glycosylase</fullName>
        <shortName>Fapy-DNA glycosylase</shortName>
        <ecNumber>3.2.2.23</ecNumber>
    </recommendedName>
    <alternativeName>
        <fullName>DNA-(apurinic or apyrimidinic site) lyase MutM</fullName>
        <shortName>AP lyase MutM</shortName>
        <ecNumber>4.2.99.18</ecNumber>
    </alternativeName>
</protein>
<accession>P55825</accession>